<comment type="function">
    <text evidence="1">One of the primary rRNA binding proteins, it binds directly near the 3'-end of the 23S rRNA, where it nucleates assembly of the 50S subunit.</text>
</comment>
<comment type="subunit">
    <text evidence="1">Part of the 50S ribosomal subunit. Forms a cluster with proteins L14 and L19.</text>
</comment>
<comment type="similarity">
    <text evidence="1">Belongs to the universal ribosomal protein uL3 family.</text>
</comment>
<sequence length="219" mass="23262">MSENQIKGILGTKLGMTQVFDEDNRVVPVTVVEAGPCVVTQIRTEEKDGYSAIQIAYGDIDPRKVNKPQSGHFAKAGVTPRRYVTEIRMDDVLSDYEVGQDVTVELFGDVKFVDVTGTTRGHGFAGAMKRHGFAGQGAAHGNQAAHRRVGGIGACATPGRVFKGTRMAGRMGNNRVTTQNLKLFKVDADSNLLLIKGAVPGIRGGLVTVKTAVKGGAHA</sequence>
<name>RL3_CORK4</name>
<reference key="1">
    <citation type="journal article" date="2008" name="J. Biotechnol.">
        <title>Ultrafast pyrosequencing of Corynebacterium kroppenstedtii DSM44385 revealed insights into the physiology of a lipophilic corynebacterium that lacks mycolic acids.</title>
        <authorList>
            <person name="Tauch A."/>
            <person name="Schneider J."/>
            <person name="Szczepanowski R."/>
            <person name="Tilker A."/>
            <person name="Viehoever P."/>
            <person name="Gartemann K.-H."/>
            <person name="Arnold W."/>
            <person name="Blom J."/>
            <person name="Brinkrolf K."/>
            <person name="Brune I."/>
            <person name="Goetker S."/>
            <person name="Weisshaar B."/>
            <person name="Goesmann A."/>
            <person name="Droege M."/>
            <person name="Puehler A."/>
        </authorList>
    </citation>
    <scope>NUCLEOTIDE SEQUENCE [LARGE SCALE GENOMIC DNA]</scope>
    <source>
        <strain>DSM 44385 / JCM 11950 / CIP 105744 / CCUG 35717</strain>
    </source>
</reference>
<feature type="chain" id="PRO_1000214502" description="Large ribosomal subunit protein uL3">
    <location>
        <begin position="1"/>
        <end position="219"/>
    </location>
</feature>
<protein>
    <recommendedName>
        <fullName evidence="1">Large ribosomal subunit protein uL3</fullName>
    </recommendedName>
    <alternativeName>
        <fullName evidence="2">50S ribosomal protein L3</fullName>
    </alternativeName>
</protein>
<gene>
    <name evidence="1" type="primary">rplC</name>
    <name type="ordered locus">ckrop_1837</name>
</gene>
<proteinExistence type="inferred from homology"/>
<dbReference type="EMBL" id="CP001620">
    <property type="protein sequence ID" value="ACR18557.1"/>
    <property type="molecule type" value="Genomic_DNA"/>
</dbReference>
<dbReference type="RefSeq" id="WP_012732444.1">
    <property type="nucleotide sequence ID" value="NC_012704.1"/>
</dbReference>
<dbReference type="SMR" id="C4LL52"/>
<dbReference type="STRING" id="645127.ckrop_1837"/>
<dbReference type="KEGG" id="ckp:ckrop_1837"/>
<dbReference type="eggNOG" id="COG0087">
    <property type="taxonomic scope" value="Bacteria"/>
</dbReference>
<dbReference type="HOGENOM" id="CLU_044142_4_1_11"/>
<dbReference type="OrthoDB" id="9806135at2"/>
<dbReference type="Proteomes" id="UP000001473">
    <property type="component" value="Chromosome"/>
</dbReference>
<dbReference type="GO" id="GO:0022625">
    <property type="term" value="C:cytosolic large ribosomal subunit"/>
    <property type="evidence" value="ECO:0007669"/>
    <property type="project" value="TreeGrafter"/>
</dbReference>
<dbReference type="GO" id="GO:0019843">
    <property type="term" value="F:rRNA binding"/>
    <property type="evidence" value="ECO:0007669"/>
    <property type="project" value="UniProtKB-UniRule"/>
</dbReference>
<dbReference type="GO" id="GO:0003735">
    <property type="term" value="F:structural constituent of ribosome"/>
    <property type="evidence" value="ECO:0007669"/>
    <property type="project" value="InterPro"/>
</dbReference>
<dbReference type="GO" id="GO:0006412">
    <property type="term" value="P:translation"/>
    <property type="evidence" value="ECO:0007669"/>
    <property type="project" value="UniProtKB-UniRule"/>
</dbReference>
<dbReference type="FunFam" id="2.40.30.10:FF:000004">
    <property type="entry name" value="50S ribosomal protein L3"/>
    <property type="match status" value="1"/>
</dbReference>
<dbReference type="FunFam" id="3.30.160.810:FF:000001">
    <property type="entry name" value="50S ribosomal protein L3"/>
    <property type="match status" value="1"/>
</dbReference>
<dbReference type="Gene3D" id="3.30.160.810">
    <property type="match status" value="1"/>
</dbReference>
<dbReference type="Gene3D" id="2.40.30.10">
    <property type="entry name" value="Translation factors"/>
    <property type="match status" value="1"/>
</dbReference>
<dbReference type="HAMAP" id="MF_01325_B">
    <property type="entry name" value="Ribosomal_uL3_B"/>
    <property type="match status" value="1"/>
</dbReference>
<dbReference type="InterPro" id="IPR000597">
    <property type="entry name" value="Ribosomal_uL3"/>
</dbReference>
<dbReference type="InterPro" id="IPR019927">
    <property type="entry name" value="Ribosomal_uL3_bac/org-type"/>
</dbReference>
<dbReference type="InterPro" id="IPR019926">
    <property type="entry name" value="Ribosomal_uL3_CS"/>
</dbReference>
<dbReference type="InterPro" id="IPR009000">
    <property type="entry name" value="Transl_B-barrel_sf"/>
</dbReference>
<dbReference type="NCBIfam" id="TIGR03625">
    <property type="entry name" value="L3_bact"/>
    <property type="match status" value="1"/>
</dbReference>
<dbReference type="PANTHER" id="PTHR11229">
    <property type="entry name" value="50S RIBOSOMAL PROTEIN L3"/>
    <property type="match status" value="1"/>
</dbReference>
<dbReference type="PANTHER" id="PTHR11229:SF16">
    <property type="entry name" value="LARGE RIBOSOMAL SUBUNIT PROTEIN UL3C"/>
    <property type="match status" value="1"/>
</dbReference>
<dbReference type="Pfam" id="PF00297">
    <property type="entry name" value="Ribosomal_L3"/>
    <property type="match status" value="1"/>
</dbReference>
<dbReference type="SUPFAM" id="SSF50447">
    <property type="entry name" value="Translation proteins"/>
    <property type="match status" value="1"/>
</dbReference>
<dbReference type="PROSITE" id="PS00474">
    <property type="entry name" value="RIBOSOMAL_L3"/>
    <property type="match status" value="1"/>
</dbReference>
<evidence type="ECO:0000255" key="1">
    <source>
        <dbReference type="HAMAP-Rule" id="MF_01325"/>
    </source>
</evidence>
<evidence type="ECO:0000305" key="2"/>
<keyword id="KW-1185">Reference proteome</keyword>
<keyword id="KW-0687">Ribonucleoprotein</keyword>
<keyword id="KW-0689">Ribosomal protein</keyword>
<keyword id="KW-0694">RNA-binding</keyword>
<keyword id="KW-0699">rRNA-binding</keyword>
<accession>C4LL52</accession>
<organism>
    <name type="scientific">Corynebacterium kroppenstedtii (strain DSM 44385 / JCM 11950 / CIP 105744 / CCUG 35717)</name>
    <dbReference type="NCBI Taxonomy" id="645127"/>
    <lineage>
        <taxon>Bacteria</taxon>
        <taxon>Bacillati</taxon>
        <taxon>Actinomycetota</taxon>
        <taxon>Actinomycetes</taxon>
        <taxon>Mycobacteriales</taxon>
        <taxon>Corynebacteriaceae</taxon>
        <taxon>Corynebacterium</taxon>
    </lineage>
</organism>